<organism>
    <name type="scientific">Saccharomyces cerevisiae (strain ATCC 204508 / S288c)</name>
    <name type="common">Baker's yeast</name>
    <dbReference type="NCBI Taxonomy" id="559292"/>
    <lineage>
        <taxon>Eukaryota</taxon>
        <taxon>Fungi</taxon>
        <taxon>Dikarya</taxon>
        <taxon>Ascomycota</taxon>
        <taxon>Saccharomycotina</taxon>
        <taxon>Saccharomycetes</taxon>
        <taxon>Saccharomycetales</taxon>
        <taxon>Saccharomycetaceae</taxon>
        <taxon>Saccharomyces</taxon>
    </lineage>
</organism>
<reference key="1">
    <citation type="journal article" date="1996" name="Yeast">
        <title>The sequence of a 30 kb fragment on the left arm of chromosome XV from Saccharomyces cerevisiae reveals 15 open reading frames, five of which correspond to previously identified genes.</title>
        <authorList>
            <person name="Sterky F."/>
            <person name="Holmberg A."/>
            <person name="Pettersson B."/>
            <person name="Uhlen M."/>
        </authorList>
    </citation>
    <scope>NUCLEOTIDE SEQUENCE [LARGE SCALE GENOMIC DNA]</scope>
</reference>
<reference key="2">
    <citation type="journal article" date="2014" name="G3 (Bethesda)">
        <title>The reference genome sequence of Saccharomyces cerevisiae: Then and now.</title>
        <authorList>
            <person name="Engel S.R."/>
            <person name="Dietrich F.S."/>
            <person name="Fisk D.G."/>
            <person name="Binkley G."/>
            <person name="Balakrishnan R."/>
            <person name="Costanzo M.C."/>
            <person name="Dwight S.S."/>
            <person name="Hitz B.C."/>
            <person name="Karra K."/>
            <person name="Nash R.S."/>
            <person name="Weng S."/>
            <person name="Wong E.D."/>
            <person name="Lloyd P."/>
            <person name="Skrzypek M.S."/>
            <person name="Miyasato S.R."/>
            <person name="Simison M."/>
            <person name="Cherry J.M."/>
        </authorList>
    </citation>
    <scope>GENOME REANNOTATION</scope>
    <source>
        <strain>ATCC 204508 / S288c</strain>
    </source>
</reference>
<reference key="3">
    <citation type="journal article" date="1997" name="Nature">
        <title>The nucleotide sequence of Saccharomyces cerevisiae chromosome XV.</title>
        <authorList>
            <person name="Dujon B."/>
            <person name="Albermann K."/>
            <person name="Aldea M."/>
            <person name="Alexandraki D."/>
            <person name="Ansorge W."/>
            <person name="Arino J."/>
            <person name="Benes V."/>
            <person name="Bohn C."/>
            <person name="Bolotin-Fukuhara M."/>
            <person name="Bordonne R."/>
            <person name="Boyer J."/>
            <person name="Camasses A."/>
            <person name="Casamayor A."/>
            <person name="Casas C."/>
            <person name="Cheret G."/>
            <person name="Cziepluch C."/>
            <person name="Daignan-Fornier B."/>
            <person name="Dang V.-D."/>
            <person name="de Haan M."/>
            <person name="Delius H."/>
            <person name="Durand P."/>
            <person name="Fairhead C."/>
            <person name="Feldmann H."/>
            <person name="Gaillon L."/>
            <person name="Galisson F."/>
            <person name="Gamo F.-J."/>
            <person name="Gancedo C."/>
            <person name="Goffeau A."/>
            <person name="Goulding S.E."/>
            <person name="Grivell L.A."/>
            <person name="Habbig B."/>
            <person name="Hand N.J."/>
            <person name="Hani J."/>
            <person name="Hattenhorst U."/>
            <person name="Hebling U."/>
            <person name="Hernando Y."/>
            <person name="Herrero E."/>
            <person name="Heumann K."/>
            <person name="Hiesel R."/>
            <person name="Hilger F."/>
            <person name="Hofmann B."/>
            <person name="Hollenberg C.P."/>
            <person name="Hughes B."/>
            <person name="Jauniaux J.-C."/>
            <person name="Kalogeropoulos A."/>
            <person name="Katsoulou C."/>
            <person name="Kordes E."/>
            <person name="Lafuente M.J."/>
            <person name="Landt O."/>
            <person name="Louis E.J."/>
            <person name="Maarse A.C."/>
            <person name="Madania A."/>
            <person name="Mannhaupt G."/>
            <person name="Marck C."/>
            <person name="Martin R.P."/>
            <person name="Mewes H.-W."/>
            <person name="Michaux G."/>
            <person name="Paces V."/>
            <person name="Parle-McDermott A.G."/>
            <person name="Pearson B.M."/>
            <person name="Perrin A."/>
            <person name="Pettersson B."/>
            <person name="Poch O."/>
            <person name="Pohl T.M."/>
            <person name="Poirey R."/>
            <person name="Portetelle D."/>
            <person name="Pujol A."/>
            <person name="Purnelle B."/>
            <person name="Ramezani Rad M."/>
            <person name="Rechmann S."/>
            <person name="Schwager C."/>
            <person name="Schweizer M."/>
            <person name="Sor F."/>
            <person name="Sterky F."/>
            <person name="Tarassov I.A."/>
            <person name="Teodoru C."/>
            <person name="Tettelin H."/>
            <person name="Thierry A."/>
            <person name="Tobiasch E."/>
            <person name="Tzermia M."/>
            <person name="Uhlen M."/>
            <person name="Unseld M."/>
            <person name="Valens M."/>
            <person name="Vandenbol M."/>
            <person name="Vetter I."/>
            <person name="Vlcek C."/>
            <person name="Voet M."/>
            <person name="Volckaert G."/>
            <person name="Voss H."/>
            <person name="Wambutt R."/>
            <person name="Wedler H."/>
            <person name="Wiemann S."/>
            <person name="Winsor B."/>
            <person name="Wolfe K.H."/>
            <person name="Zollner A."/>
            <person name="Zumstein E."/>
            <person name="Kleine K."/>
        </authorList>
    </citation>
    <scope>NUCLEOTIDE SEQUENCE [LARGE SCALE GENOMIC DNA]</scope>
    <source>
        <strain>ATCC 204508 / S288c</strain>
    </source>
</reference>
<reference key="4">
    <citation type="submission" date="2005-06" db="UniProtKB">
        <authorList>
            <person name="Bienvenut W.V."/>
            <person name="Peters C."/>
        </authorList>
    </citation>
    <scope>PROTEIN SEQUENCE OF 131-142 AND 158-171</scope>
    <scope>IDENTIFICATION BY MASS SPECTROMETRY</scope>
</reference>
<reference key="5">
    <citation type="journal article" date="2002" name="Cell Stress Chaperones">
        <title>Small glutamine-rich protein/viral protein U-binding protein is a novel cochaperone that affects heat shock protein 70 activity.</title>
        <authorList>
            <person name="Angeletti P.C."/>
            <person name="Walker D."/>
            <person name="Panganiban A.T."/>
        </authorList>
    </citation>
    <scope>FUNCTION</scope>
</reference>
<reference key="6">
    <citation type="journal article" date="2003" name="Nature">
        <title>Global analysis of protein localization in budding yeast.</title>
        <authorList>
            <person name="Huh W.-K."/>
            <person name="Falvo J.V."/>
            <person name="Gerke L.C."/>
            <person name="Carroll A.S."/>
            <person name="Howson R.W."/>
            <person name="Weissman J.S."/>
            <person name="O'Shea E.K."/>
        </authorList>
    </citation>
    <scope>SUBCELLULAR LOCATION [LARGE SCALE ANALYSIS]</scope>
</reference>
<reference key="7">
    <citation type="journal article" date="2003" name="Nature">
        <title>Global analysis of protein expression in yeast.</title>
        <authorList>
            <person name="Ghaemmaghami S."/>
            <person name="Huh W.-K."/>
            <person name="Bower K."/>
            <person name="Howson R.W."/>
            <person name="Belle A."/>
            <person name="Dephoure N."/>
            <person name="O'Shea E.K."/>
            <person name="Weissman J.S."/>
        </authorList>
    </citation>
    <scope>LEVEL OF PROTEIN EXPRESSION [LARGE SCALE ANALYSIS]</scope>
</reference>
<reference key="8">
    <citation type="journal article" date="2007" name="Cell Stress Chaperones">
        <title>SGT2 and MDY2 interact with molecular chaperone YDJ1 in Saccharomyces cerevisiae.</title>
        <authorList>
            <person name="Liou S.-T."/>
            <person name="Cheng M.-Y."/>
            <person name="Wang C."/>
        </authorList>
    </citation>
    <scope>INTERACTION WITH HSC82; HSP104; MDY2; SSA1 AND SSA2</scope>
</reference>
<reference key="9">
    <citation type="journal article" date="2008" name="Mol. Cell. Proteomics">
        <title>A multidimensional chromatography technology for in-depth phosphoproteome analysis.</title>
        <authorList>
            <person name="Albuquerque C.P."/>
            <person name="Smolka M.B."/>
            <person name="Payne S.H."/>
            <person name="Bafna V."/>
            <person name="Eng J."/>
            <person name="Zhou H."/>
        </authorList>
    </citation>
    <scope>PHOSPHORYLATION [LARGE SCALE ANALYSIS] AT THR-308</scope>
    <scope>IDENTIFICATION BY MASS SPECTROMETRY [LARGE SCALE ANALYSIS]</scope>
</reference>
<reference key="10">
    <citation type="journal article" date="2009" name="Science">
        <title>Global analysis of Cdk1 substrate phosphorylation sites provides insights into evolution.</title>
        <authorList>
            <person name="Holt L.J."/>
            <person name="Tuch B.B."/>
            <person name="Villen J."/>
            <person name="Johnson A.D."/>
            <person name="Gygi S.P."/>
            <person name="Morgan D.O."/>
        </authorList>
    </citation>
    <scope>IDENTIFICATION BY MASS SPECTROMETRY [LARGE SCALE ANALYSIS]</scope>
</reference>
<protein>
    <recommendedName>
        <fullName>Small glutamine-rich tetratricopeptide repeat-containing protein 2</fullName>
    </recommendedName>
    <alternativeName>
        <fullName>SGT/UBP</fullName>
    </alternativeName>
    <alternativeName>
        <fullName>Viral protein U-binding protein</fullName>
    </alternativeName>
</protein>
<keyword id="KW-0002">3D-structure</keyword>
<keyword id="KW-0143">Chaperone</keyword>
<keyword id="KW-0963">Cytoplasm</keyword>
<keyword id="KW-0903">Direct protein sequencing</keyword>
<keyword id="KW-0597">Phosphoprotein</keyword>
<keyword id="KW-1185">Reference proteome</keyword>
<keyword id="KW-0677">Repeat</keyword>
<keyword id="KW-0802">TPR repeat</keyword>
<proteinExistence type="evidence at protein level"/>
<dbReference type="EMBL" id="U43491">
    <property type="protein sequence ID" value="AAC49487.1"/>
    <property type="molecule type" value="Genomic_DNA"/>
</dbReference>
<dbReference type="EMBL" id="Z74915">
    <property type="protein sequence ID" value="CAA99195.1"/>
    <property type="molecule type" value="Genomic_DNA"/>
</dbReference>
<dbReference type="EMBL" id="BK006948">
    <property type="protein sequence ID" value="DAA10789.1"/>
    <property type="molecule type" value="Genomic_DNA"/>
</dbReference>
<dbReference type="PIR" id="S61991">
    <property type="entry name" value="S61991"/>
</dbReference>
<dbReference type="RefSeq" id="NP_014649.1">
    <property type="nucleotide sequence ID" value="NM_001183426.1"/>
</dbReference>
<dbReference type="PDB" id="2LXB">
    <property type="method" value="NMR"/>
    <property type="chains" value="A/B=2-72"/>
</dbReference>
<dbReference type="PDB" id="2LXC">
    <property type="method" value="NMR"/>
    <property type="chains" value="B/C=2-72"/>
</dbReference>
<dbReference type="PDB" id="3ZDM">
    <property type="method" value="X-ray"/>
    <property type="resolution" value="1.80 A"/>
    <property type="chains" value="A/B/D/E=1-72"/>
</dbReference>
<dbReference type="PDB" id="4ASV">
    <property type="method" value="NMR"/>
    <property type="chains" value="A/B=1-78"/>
</dbReference>
<dbReference type="PDB" id="4ASW">
    <property type="method" value="NMR"/>
    <property type="chains" value="A/B=1-78"/>
</dbReference>
<dbReference type="PDB" id="5LYN">
    <property type="method" value="X-ray"/>
    <property type="resolution" value="2.00 A"/>
    <property type="chains" value="A/B=96-225"/>
</dbReference>
<dbReference type="PDB" id="5LYP">
    <property type="method" value="X-ray"/>
    <property type="resolution" value="1.55 A"/>
    <property type="chains" value="A=93-229"/>
</dbReference>
<dbReference type="PDBsum" id="2LXB"/>
<dbReference type="PDBsum" id="2LXC"/>
<dbReference type="PDBsum" id="3ZDM"/>
<dbReference type="PDBsum" id="4ASV"/>
<dbReference type="PDBsum" id="4ASW"/>
<dbReference type="PDBsum" id="5LYN"/>
<dbReference type="PDBsum" id="5LYP"/>
<dbReference type="BMRB" id="Q12118"/>
<dbReference type="SMR" id="Q12118"/>
<dbReference type="BioGRID" id="34410">
    <property type="interactions" value="280"/>
</dbReference>
<dbReference type="ComplexPortal" id="CPX-1861">
    <property type="entry name" value="GET4-GET5 transmembrane domain recognition complex"/>
</dbReference>
<dbReference type="DIP" id="DIP-1983N"/>
<dbReference type="FunCoup" id="Q12118">
    <property type="interactions" value="738"/>
</dbReference>
<dbReference type="IntAct" id="Q12118">
    <property type="interactions" value="22"/>
</dbReference>
<dbReference type="MINT" id="Q12118"/>
<dbReference type="STRING" id="4932.YOR007C"/>
<dbReference type="TCDB" id="3.A.21.1.1">
    <property type="family name" value="the c-terminal tail-anchored membrane protein biogenesis/ insertion complex (tamp-b) family"/>
</dbReference>
<dbReference type="iPTMnet" id="Q12118"/>
<dbReference type="PaxDb" id="4932-YOR007C"/>
<dbReference type="PeptideAtlas" id="Q12118"/>
<dbReference type="EnsemblFungi" id="YOR007C_mRNA">
    <property type="protein sequence ID" value="YOR007C"/>
    <property type="gene ID" value="YOR007C"/>
</dbReference>
<dbReference type="GeneID" id="854168"/>
<dbReference type="KEGG" id="sce:YOR007C"/>
<dbReference type="AGR" id="SGD:S000005533"/>
<dbReference type="SGD" id="S000005533">
    <property type="gene designation" value="SGT2"/>
</dbReference>
<dbReference type="VEuPathDB" id="FungiDB:YOR007C"/>
<dbReference type="eggNOG" id="KOG0553">
    <property type="taxonomic scope" value="Eukaryota"/>
</dbReference>
<dbReference type="HOGENOM" id="CLU_044224_1_0_1"/>
<dbReference type="InParanoid" id="Q12118"/>
<dbReference type="OMA" id="DMARNMM"/>
<dbReference type="OrthoDB" id="2335338at2759"/>
<dbReference type="BioCyc" id="YEAST:G3O-33557-MONOMER"/>
<dbReference type="Reactome" id="R-SCE-9609523">
    <property type="pathway name" value="Insertion of tail-anchored proteins into the endoplasmic reticulum membrane"/>
</dbReference>
<dbReference type="BioGRID-ORCS" id="854168">
    <property type="hits" value="0 hits in 10 CRISPR screens"/>
</dbReference>
<dbReference type="EvolutionaryTrace" id="Q12118"/>
<dbReference type="PRO" id="PR:Q12118"/>
<dbReference type="Proteomes" id="UP000002311">
    <property type="component" value="Chromosome XV"/>
</dbReference>
<dbReference type="RNAct" id="Q12118">
    <property type="molecule type" value="protein"/>
</dbReference>
<dbReference type="GO" id="GO:0005737">
    <property type="term" value="C:cytoplasm"/>
    <property type="evidence" value="ECO:0007005"/>
    <property type="project" value="SGD"/>
</dbReference>
<dbReference type="GO" id="GO:0005829">
    <property type="term" value="C:cytosol"/>
    <property type="evidence" value="ECO:0000304"/>
    <property type="project" value="Reactome"/>
</dbReference>
<dbReference type="GO" id="GO:0016020">
    <property type="term" value="C:membrane"/>
    <property type="evidence" value="ECO:0000318"/>
    <property type="project" value="GO_Central"/>
</dbReference>
<dbReference type="GO" id="GO:0072380">
    <property type="term" value="C:TRC complex"/>
    <property type="evidence" value="ECO:0000314"/>
    <property type="project" value="SGD"/>
</dbReference>
<dbReference type="GO" id="GO:0042802">
    <property type="term" value="F:identical protein binding"/>
    <property type="evidence" value="ECO:0000353"/>
    <property type="project" value="IntAct"/>
</dbReference>
<dbReference type="GO" id="GO:0060090">
    <property type="term" value="F:molecular adaptor activity"/>
    <property type="evidence" value="ECO:0000315"/>
    <property type="project" value="SGD"/>
</dbReference>
<dbReference type="GO" id="GO:0006620">
    <property type="term" value="P:post-translational protein targeting to endoplasmic reticulum membrane"/>
    <property type="evidence" value="ECO:0000314"/>
    <property type="project" value="SGD"/>
</dbReference>
<dbReference type="GO" id="GO:0009408">
    <property type="term" value="P:response to heat"/>
    <property type="evidence" value="ECO:0000315"/>
    <property type="project" value="SGD"/>
</dbReference>
<dbReference type="FunFam" id="1.25.40.10:FF:000207">
    <property type="entry name" value="Small glutamine-rich tetratricopeptide repeat-containing protein"/>
    <property type="match status" value="1"/>
</dbReference>
<dbReference type="Gene3D" id="1.20.5.420">
    <property type="entry name" value="Immunoglobulin FC, subunit C"/>
    <property type="match status" value="1"/>
</dbReference>
<dbReference type="Gene3D" id="1.25.40.10">
    <property type="entry name" value="Tetratricopeptide repeat domain"/>
    <property type="match status" value="1"/>
</dbReference>
<dbReference type="InterPro" id="IPR047150">
    <property type="entry name" value="SGT"/>
</dbReference>
<dbReference type="InterPro" id="IPR032374">
    <property type="entry name" value="SGTA_dimer"/>
</dbReference>
<dbReference type="InterPro" id="IPR011990">
    <property type="entry name" value="TPR-like_helical_dom_sf"/>
</dbReference>
<dbReference type="InterPro" id="IPR019734">
    <property type="entry name" value="TPR_rpt"/>
</dbReference>
<dbReference type="PANTHER" id="PTHR45831">
    <property type="entry name" value="LD24721P"/>
    <property type="match status" value="1"/>
</dbReference>
<dbReference type="PANTHER" id="PTHR45831:SF2">
    <property type="entry name" value="LD24721P"/>
    <property type="match status" value="1"/>
</dbReference>
<dbReference type="Pfam" id="PF16546">
    <property type="entry name" value="SGTA_dimer"/>
    <property type="match status" value="1"/>
</dbReference>
<dbReference type="Pfam" id="PF00515">
    <property type="entry name" value="TPR_1"/>
    <property type="match status" value="2"/>
</dbReference>
<dbReference type="SMART" id="SM00028">
    <property type="entry name" value="TPR"/>
    <property type="match status" value="3"/>
</dbReference>
<dbReference type="SUPFAM" id="SSF48452">
    <property type="entry name" value="TPR-like"/>
    <property type="match status" value="1"/>
</dbReference>
<dbReference type="PROSITE" id="PS50005">
    <property type="entry name" value="TPR"/>
    <property type="match status" value="3"/>
</dbReference>
<dbReference type="PROSITE" id="PS50293">
    <property type="entry name" value="TPR_REGION"/>
    <property type="match status" value="1"/>
</dbReference>
<sequence>MSASKEEIAALIVNYFSSIVEKKEISEDGADSLNVAMDCISEAFGFEREAVSGILGKSEFKGQHLADILNSASRVPESNKKDDAENVEINIPEDDAETKAKAEDLKMQGNKAMANKDYELAINKYTEAIKVLPTNAIYYANRAAAHSSLKEYDQAVKDAESAISIDPSYFRGYSRLGFAKYAQGKPEEALEAYKKVLDIEGDNATEAMKRDYESAKKKVEQSLNLEKTVPEQSRDADVDASQGASAGGLPDLGSLLGGGLGGLMNNPQLMQAAQKMMSNPGAMQNIQKMMQDPSIRQMAEGFASGGGTPNLSDLMNNPALRNMAGNLFGGAGAQSTDETPDNENKQ</sequence>
<name>SGT2_YEAST</name>
<comment type="function">
    <text evidence="1 3">Co-chaperone that binds to the molecular chaperone Hsp70 (SSA1 and SSA2). Regulates Hsp70 ATPase activity (By similarity). Required for recovery from heat shock.</text>
</comment>
<comment type="subunit">
    <text evidence="6">Interacts with HSC82, HSP104, MDY2, SSA1 and SSA2.</text>
</comment>
<comment type="interaction">
    <interactant intactId="EBI-31784">
        <id>Q12118</id>
    </interactant>
    <interactant intactId="EBI-25059">
        <id>P40515</id>
        <label>FIS1</label>
    </interactant>
    <organismsDiffer>false</organismsDiffer>
    <experiments>3</experiments>
</comment>
<comment type="interaction">
    <interactant intactId="EBI-31784">
        <id>Q12118</id>
    </interactant>
    <interactant intactId="EBI-36940">
        <id>Q12125</id>
        <label>GET4</label>
    </interactant>
    <organismsDiffer>false</organismsDiffer>
    <experiments>6</experiments>
</comment>
<comment type="interaction">
    <interactant intactId="EBI-31784">
        <id>Q12118</id>
    </interactant>
    <interactant intactId="EBI-34904">
        <id>Q12285</id>
        <label>MDY2</label>
    </interactant>
    <organismsDiffer>false</organismsDiffer>
    <experiments>16</experiments>
</comment>
<comment type="interaction">
    <interactant intactId="EBI-31784">
        <id>Q12118</id>
    </interactant>
    <interactant intactId="EBI-16577">
        <id>P22214</id>
        <label>SEC22</label>
    </interactant>
    <organismsDiffer>false</organismsDiffer>
    <experiments>4</experiments>
</comment>
<comment type="interaction">
    <interactant intactId="EBI-31784">
        <id>Q12118</id>
    </interactant>
    <interactant intactId="EBI-31784">
        <id>Q12118</id>
        <label>SGT2</label>
    </interactant>
    <organismsDiffer>false</organismsDiffer>
    <experiments>4</experiments>
</comment>
<comment type="interaction">
    <interactant intactId="EBI-31784">
        <id>Q12118</id>
    </interactant>
    <interactant intactId="EBI-21630">
        <id>P38276</id>
        <label>YBR137W</label>
    </interactant>
    <organismsDiffer>false</organismsDiffer>
    <experiments>3</experiments>
</comment>
<comment type="interaction">
    <interactant intactId="EBI-31784">
        <id>Q12118</id>
    </interactant>
    <interactant intactId="EBI-10420">
        <id>P25491</id>
        <label>YDJ1</label>
    </interactant>
    <organismsDiffer>false</organismsDiffer>
    <experiments>2</experiments>
</comment>
<comment type="subcellular location">
    <subcellularLocation>
        <location evidence="4">Cytoplasm</location>
    </subcellularLocation>
</comment>
<comment type="miscellaneous">
    <text evidence="5">Present with 9424 molecules/cell in log phase SD medium.</text>
</comment>
<comment type="similarity">
    <text evidence="7">Belongs to the SGT family.</text>
</comment>
<evidence type="ECO:0000250" key="1"/>
<evidence type="ECO:0000256" key="2">
    <source>
        <dbReference type="SAM" id="MobiDB-lite"/>
    </source>
</evidence>
<evidence type="ECO:0000269" key="3">
    <source>
    </source>
</evidence>
<evidence type="ECO:0000269" key="4">
    <source>
    </source>
</evidence>
<evidence type="ECO:0000269" key="5">
    <source>
    </source>
</evidence>
<evidence type="ECO:0000269" key="6">
    <source>
    </source>
</evidence>
<evidence type="ECO:0000305" key="7"/>
<evidence type="ECO:0007744" key="8">
    <source>
    </source>
</evidence>
<evidence type="ECO:0007829" key="9">
    <source>
        <dbReference type="PDB" id="2LXB"/>
    </source>
</evidence>
<evidence type="ECO:0007829" key="10">
    <source>
        <dbReference type="PDB" id="3ZDM"/>
    </source>
</evidence>
<evidence type="ECO:0007829" key="11">
    <source>
        <dbReference type="PDB" id="5LYP"/>
    </source>
</evidence>
<accession>Q12118</accession>
<accession>D6W273</accession>
<feature type="chain" id="PRO_0000106370" description="Small glutamine-rich tetratricopeptide repeat-containing protein 2">
    <location>
        <begin position="1"/>
        <end position="346"/>
    </location>
</feature>
<feature type="repeat" description="TPR 1">
    <location>
        <begin position="102"/>
        <end position="135"/>
    </location>
</feature>
<feature type="repeat" description="TPR 2">
    <location>
        <begin position="136"/>
        <end position="169"/>
    </location>
</feature>
<feature type="repeat" description="TPR 3">
    <location>
        <begin position="170"/>
        <end position="203"/>
    </location>
</feature>
<feature type="repeat" description="TPR 4">
    <location>
        <begin position="205"/>
        <end position="229"/>
    </location>
</feature>
<feature type="region of interest" description="Disordered" evidence="2">
    <location>
        <begin position="219"/>
        <end position="249"/>
    </location>
</feature>
<feature type="region of interest" description="Disordered" evidence="2">
    <location>
        <begin position="325"/>
        <end position="346"/>
    </location>
</feature>
<feature type="compositionally biased region" description="Basic and acidic residues" evidence="2">
    <location>
        <begin position="228"/>
        <end position="237"/>
    </location>
</feature>
<feature type="modified residue" description="Phosphothreonine" evidence="8">
    <location>
        <position position="308"/>
    </location>
</feature>
<feature type="helix" evidence="10">
    <location>
        <begin position="5"/>
        <end position="21"/>
    </location>
</feature>
<feature type="helix" evidence="10">
    <location>
        <begin position="27"/>
        <end position="44"/>
    </location>
</feature>
<feature type="helix" evidence="10">
    <location>
        <begin position="48"/>
        <end position="50"/>
    </location>
</feature>
<feature type="helix" evidence="10">
    <location>
        <begin position="51"/>
        <end position="56"/>
    </location>
</feature>
<feature type="helix" evidence="10">
    <location>
        <begin position="58"/>
        <end position="68"/>
    </location>
</feature>
<feature type="helix" evidence="9">
    <location>
        <begin position="69"/>
        <end position="71"/>
    </location>
</feature>
<feature type="helix" evidence="11">
    <location>
        <begin position="96"/>
        <end position="114"/>
    </location>
</feature>
<feature type="helix" evidence="11">
    <location>
        <begin position="118"/>
        <end position="131"/>
    </location>
</feature>
<feature type="helix" evidence="11">
    <location>
        <begin position="136"/>
        <end position="148"/>
    </location>
</feature>
<feature type="helix" evidence="11">
    <location>
        <begin position="152"/>
        <end position="165"/>
    </location>
</feature>
<feature type="helix" evidence="11">
    <location>
        <begin position="170"/>
        <end position="182"/>
    </location>
</feature>
<feature type="helix" evidence="11">
    <location>
        <begin position="186"/>
        <end position="200"/>
    </location>
</feature>
<feature type="helix" evidence="11">
    <location>
        <begin position="201"/>
        <end position="203"/>
    </location>
</feature>
<feature type="helix" evidence="11">
    <location>
        <begin position="206"/>
        <end position="224"/>
    </location>
</feature>
<gene>
    <name type="primary">SGT2</name>
    <name type="ordered locus">YOR007C</name>
    <name type="ORF">UNF346</name>
</gene>